<keyword id="KW-0007">Acetylation</keyword>
<keyword id="KW-0113">Calvin cycle</keyword>
<keyword id="KW-0120">Carbon dioxide fixation</keyword>
<keyword id="KW-0150">Chloroplast</keyword>
<keyword id="KW-0456">Lyase</keyword>
<keyword id="KW-0460">Magnesium</keyword>
<keyword id="KW-0479">Metal-binding</keyword>
<keyword id="KW-0488">Methylation</keyword>
<keyword id="KW-0503">Monooxygenase</keyword>
<keyword id="KW-0560">Oxidoreductase</keyword>
<keyword id="KW-0601">Photorespiration</keyword>
<keyword id="KW-0602">Photosynthesis</keyword>
<keyword id="KW-0934">Plastid</keyword>
<geneLocation type="chloroplast"/>
<gene>
    <name evidence="1" type="primary">rbcL</name>
</gene>
<sequence>MSPQTETKARVGFKAGVKDYRLTYYTPDYQPKDTDILAAFRMTPQPGVPPEEAGAAVAAESSTGTWTTVWTDGLTSLDRYKGRCYDIEPVPGEENQYIAYIAYPLDLFEEGSVTNLFTSIVGNVFGFKALRALRLEDLRIPPAYVKTFQGPPHGIQVERDKLNKYGRGLLGCTIKPKLGLSAKNYGRAVYECLRGGLDFTKDDENVNSQPFMRWRDRFLFVAEAIYKSQAETGEIKGHYLNATAATAEAMMQRAECAKDLGVPIIMHDYLTGGFTANTSLSHYCRDNGLLLHIHRAMHAVIDRQRNHGITFRVLAKALRLSGGDHLHSGTVVGKLEGEREVTLGFVDLMRDDYIEKDRSRGIYFTQDWVSLPGTMPVASGGIHVWHMPALVEIFGDDACLQFGGGTLGHPWGNAPGAAANRVALEACTQARNEGRDLAREGGDVIRAACKWSPELAAACEVWKEIKFEFETIDTL</sequence>
<reference key="1">
    <citation type="journal article" date="1988" name="Plant Mol. Biol.">
        <title>Chlorella chloroplast DNA sequence containing a gene for the large subunit of ribulose-1, 5-bisphosphate carboxylase and a part of a possible gene for the beta' subunit of RNA polymerase.</title>
        <authorList>
            <person name="Yoshinaga K."/>
            <person name="Ohta T."/>
            <person name="Suzuki Y."/>
            <person name="Sugiura M."/>
        </authorList>
        <dbReference type="AGRICOLA" id="IND92000630"/>
    </citation>
    <scope>NUCLEOTIDE SEQUENCE [GENOMIC DNA]</scope>
    <source>
        <strain>IAM C-27 / Tamiya</strain>
    </source>
</reference>
<reference key="2">
    <citation type="journal article" date="1997" name="Proc. Natl. Acad. Sci. U.S.A.">
        <title>Complete nucleotide sequence of the chloroplast genome from the green alga Chlorella vulgaris: the existence of genes possibly involved in chloroplast division.</title>
        <authorList>
            <person name="Wakasugi T."/>
            <person name="Nagai T."/>
            <person name="Kapoor M."/>
            <person name="Sugita M."/>
            <person name="Ito M."/>
            <person name="Ito S."/>
            <person name="Tsudzuki J."/>
            <person name="Nakashima K."/>
            <person name="Tsudzuki T."/>
            <person name="Suzuki Y."/>
            <person name="Hamada A."/>
            <person name="Ohta T."/>
            <person name="Inamura A."/>
            <person name="Yoshinaga K."/>
            <person name="Sugiura M."/>
        </authorList>
    </citation>
    <scope>NUCLEOTIDE SEQUENCE [LARGE SCALE GENOMIC DNA]</scope>
    <source>
        <strain>IAM C-27 / Tamiya</strain>
    </source>
</reference>
<accession>P12466</accession>
<protein>
    <recommendedName>
        <fullName evidence="1">Ribulose bisphosphate carboxylase large chain</fullName>
        <shortName evidence="1">RuBisCO large subunit</shortName>
        <ecNumber evidence="1">4.1.1.39</ecNumber>
    </recommendedName>
</protein>
<organism>
    <name type="scientific">Chlorella vulgaris</name>
    <name type="common">Green alga</name>
    <dbReference type="NCBI Taxonomy" id="3077"/>
    <lineage>
        <taxon>Eukaryota</taxon>
        <taxon>Viridiplantae</taxon>
        <taxon>Chlorophyta</taxon>
        <taxon>core chlorophytes</taxon>
        <taxon>Trebouxiophyceae</taxon>
        <taxon>Chlorellales</taxon>
        <taxon>Chlorellaceae</taxon>
        <taxon>Chlorella clade</taxon>
        <taxon>Chlorella</taxon>
    </lineage>
</organism>
<evidence type="ECO:0000255" key="1">
    <source>
        <dbReference type="HAMAP-Rule" id="MF_01338"/>
    </source>
</evidence>
<name>RBL_CHLVU</name>
<proteinExistence type="inferred from homology"/>
<feature type="propeptide" id="PRO_0000031171" evidence="1">
    <location>
        <begin position="1"/>
        <end position="2"/>
    </location>
</feature>
<feature type="chain" id="PRO_0000031172" description="Ribulose bisphosphate carboxylase large chain">
    <location>
        <begin position="3"/>
        <end position="475"/>
    </location>
</feature>
<feature type="active site" description="Proton acceptor" evidence="1">
    <location>
        <position position="175"/>
    </location>
</feature>
<feature type="active site" description="Proton acceptor" evidence="1">
    <location>
        <position position="294"/>
    </location>
</feature>
<feature type="binding site" description="in homodimeric partner" evidence="1">
    <location>
        <position position="123"/>
    </location>
    <ligand>
        <name>substrate</name>
    </ligand>
</feature>
<feature type="binding site" evidence="1">
    <location>
        <position position="173"/>
    </location>
    <ligand>
        <name>substrate</name>
    </ligand>
</feature>
<feature type="binding site" evidence="1">
    <location>
        <position position="177"/>
    </location>
    <ligand>
        <name>substrate</name>
    </ligand>
</feature>
<feature type="binding site" description="via carbamate group" evidence="1">
    <location>
        <position position="201"/>
    </location>
    <ligand>
        <name>Mg(2+)</name>
        <dbReference type="ChEBI" id="CHEBI:18420"/>
    </ligand>
</feature>
<feature type="binding site" evidence="1">
    <location>
        <position position="203"/>
    </location>
    <ligand>
        <name>Mg(2+)</name>
        <dbReference type="ChEBI" id="CHEBI:18420"/>
    </ligand>
</feature>
<feature type="binding site" evidence="1">
    <location>
        <position position="204"/>
    </location>
    <ligand>
        <name>Mg(2+)</name>
        <dbReference type="ChEBI" id="CHEBI:18420"/>
    </ligand>
</feature>
<feature type="binding site" evidence="1">
    <location>
        <position position="295"/>
    </location>
    <ligand>
        <name>substrate</name>
    </ligand>
</feature>
<feature type="binding site" evidence="1">
    <location>
        <position position="327"/>
    </location>
    <ligand>
        <name>substrate</name>
    </ligand>
</feature>
<feature type="binding site" evidence="1">
    <location>
        <position position="379"/>
    </location>
    <ligand>
        <name>substrate</name>
    </ligand>
</feature>
<feature type="site" description="Transition state stabilizer" evidence="1">
    <location>
        <position position="334"/>
    </location>
</feature>
<feature type="modified residue" description="N-acetylproline" evidence="1">
    <location>
        <position position="3"/>
    </location>
</feature>
<feature type="modified residue" description="N6,N6,N6-trimethyllysine" evidence="1">
    <location>
        <position position="14"/>
    </location>
</feature>
<feature type="modified residue" description="N6-carboxylysine" evidence="1">
    <location>
        <position position="201"/>
    </location>
</feature>
<dbReference type="EC" id="4.1.1.39" evidence="1"/>
<dbReference type="EMBL" id="M20655">
    <property type="protein sequence ID" value="AAA84108.1"/>
    <property type="molecule type" value="Genomic_DNA"/>
</dbReference>
<dbReference type="EMBL" id="D10997">
    <property type="protein sequence ID" value="BAA01765.1"/>
    <property type="molecule type" value="Genomic_DNA"/>
</dbReference>
<dbReference type="EMBL" id="AB001684">
    <property type="protein sequence ID" value="BAA57973.1"/>
    <property type="molecule type" value="Genomic_DNA"/>
</dbReference>
<dbReference type="PIR" id="A37257">
    <property type="entry name" value="RKKLLP"/>
</dbReference>
<dbReference type="PIR" id="T07325">
    <property type="entry name" value="T07325"/>
</dbReference>
<dbReference type="RefSeq" id="NP_045897.1">
    <property type="nucleotide sequence ID" value="NC_001865.1"/>
</dbReference>
<dbReference type="SMR" id="P12466"/>
<dbReference type="GeneID" id="809164"/>
<dbReference type="GO" id="GO:0009507">
    <property type="term" value="C:chloroplast"/>
    <property type="evidence" value="ECO:0007669"/>
    <property type="project" value="UniProtKB-SubCell"/>
</dbReference>
<dbReference type="GO" id="GO:0000287">
    <property type="term" value="F:magnesium ion binding"/>
    <property type="evidence" value="ECO:0007669"/>
    <property type="project" value="UniProtKB-UniRule"/>
</dbReference>
<dbReference type="GO" id="GO:0004497">
    <property type="term" value="F:monooxygenase activity"/>
    <property type="evidence" value="ECO:0007669"/>
    <property type="project" value="UniProtKB-KW"/>
</dbReference>
<dbReference type="GO" id="GO:0016984">
    <property type="term" value="F:ribulose-bisphosphate carboxylase activity"/>
    <property type="evidence" value="ECO:0007669"/>
    <property type="project" value="UniProtKB-UniRule"/>
</dbReference>
<dbReference type="GO" id="GO:0009853">
    <property type="term" value="P:photorespiration"/>
    <property type="evidence" value="ECO:0007669"/>
    <property type="project" value="UniProtKB-KW"/>
</dbReference>
<dbReference type="GO" id="GO:0019253">
    <property type="term" value="P:reductive pentose-phosphate cycle"/>
    <property type="evidence" value="ECO:0007669"/>
    <property type="project" value="UniProtKB-UniRule"/>
</dbReference>
<dbReference type="CDD" id="cd08212">
    <property type="entry name" value="RuBisCO_large_I"/>
    <property type="match status" value="1"/>
</dbReference>
<dbReference type="FunFam" id="3.30.70.150:FF:000001">
    <property type="entry name" value="Ribulose bisphosphate carboxylase large chain"/>
    <property type="match status" value="1"/>
</dbReference>
<dbReference type="Gene3D" id="3.20.20.110">
    <property type="entry name" value="Ribulose bisphosphate carboxylase, large subunit, C-terminal domain"/>
    <property type="match status" value="1"/>
</dbReference>
<dbReference type="Gene3D" id="3.30.70.150">
    <property type="entry name" value="RuBisCO large subunit, N-terminal domain"/>
    <property type="match status" value="1"/>
</dbReference>
<dbReference type="HAMAP" id="MF_01338">
    <property type="entry name" value="RuBisCO_L_type1"/>
    <property type="match status" value="1"/>
</dbReference>
<dbReference type="InterPro" id="IPR033966">
    <property type="entry name" value="RuBisCO"/>
</dbReference>
<dbReference type="InterPro" id="IPR020878">
    <property type="entry name" value="RuBisCo_large_chain_AS"/>
</dbReference>
<dbReference type="InterPro" id="IPR000685">
    <property type="entry name" value="RuBisCO_lsu_C"/>
</dbReference>
<dbReference type="InterPro" id="IPR036376">
    <property type="entry name" value="RuBisCO_lsu_C_sf"/>
</dbReference>
<dbReference type="InterPro" id="IPR017443">
    <property type="entry name" value="RuBisCO_lsu_fd_N"/>
</dbReference>
<dbReference type="InterPro" id="IPR036422">
    <property type="entry name" value="RuBisCO_lsu_N_sf"/>
</dbReference>
<dbReference type="InterPro" id="IPR020888">
    <property type="entry name" value="RuBisCO_lsuI"/>
</dbReference>
<dbReference type="NCBIfam" id="NF003252">
    <property type="entry name" value="PRK04208.1"/>
    <property type="match status" value="1"/>
</dbReference>
<dbReference type="PANTHER" id="PTHR42704">
    <property type="entry name" value="RIBULOSE BISPHOSPHATE CARBOXYLASE"/>
    <property type="match status" value="1"/>
</dbReference>
<dbReference type="PANTHER" id="PTHR42704:SF17">
    <property type="entry name" value="RIBULOSE BISPHOSPHATE CARBOXYLASE LARGE CHAIN"/>
    <property type="match status" value="1"/>
</dbReference>
<dbReference type="Pfam" id="PF00016">
    <property type="entry name" value="RuBisCO_large"/>
    <property type="match status" value="1"/>
</dbReference>
<dbReference type="Pfam" id="PF02788">
    <property type="entry name" value="RuBisCO_large_N"/>
    <property type="match status" value="1"/>
</dbReference>
<dbReference type="SFLD" id="SFLDG01052">
    <property type="entry name" value="RuBisCO"/>
    <property type="match status" value="1"/>
</dbReference>
<dbReference type="SFLD" id="SFLDS00014">
    <property type="entry name" value="RuBisCO"/>
    <property type="match status" value="1"/>
</dbReference>
<dbReference type="SFLD" id="SFLDG00301">
    <property type="entry name" value="RuBisCO-like_proteins"/>
    <property type="match status" value="1"/>
</dbReference>
<dbReference type="SUPFAM" id="SSF51649">
    <property type="entry name" value="RuBisCo, C-terminal domain"/>
    <property type="match status" value="1"/>
</dbReference>
<dbReference type="SUPFAM" id="SSF54966">
    <property type="entry name" value="RuBisCO, large subunit, small (N-terminal) domain"/>
    <property type="match status" value="1"/>
</dbReference>
<dbReference type="PROSITE" id="PS00157">
    <property type="entry name" value="RUBISCO_LARGE"/>
    <property type="match status" value="1"/>
</dbReference>
<comment type="function">
    <text evidence="1">RuBisCO catalyzes two reactions: the carboxylation of D-ribulose 1,5-bisphosphate, the primary event in carbon dioxide fixation, as well as the oxidative fragmentation of the pentose substrate in the photorespiration process. Both reactions occur simultaneously and in competition at the same active site.</text>
</comment>
<comment type="catalytic activity">
    <reaction evidence="1">
        <text>2 (2R)-3-phosphoglycerate + 2 H(+) = D-ribulose 1,5-bisphosphate + CO2 + H2O</text>
        <dbReference type="Rhea" id="RHEA:23124"/>
        <dbReference type="ChEBI" id="CHEBI:15377"/>
        <dbReference type="ChEBI" id="CHEBI:15378"/>
        <dbReference type="ChEBI" id="CHEBI:16526"/>
        <dbReference type="ChEBI" id="CHEBI:57870"/>
        <dbReference type="ChEBI" id="CHEBI:58272"/>
        <dbReference type="EC" id="4.1.1.39"/>
    </reaction>
</comment>
<comment type="catalytic activity">
    <reaction evidence="1">
        <text>D-ribulose 1,5-bisphosphate + O2 = 2-phosphoglycolate + (2R)-3-phosphoglycerate + 2 H(+)</text>
        <dbReference type="Rhea" id="RHEA:36631"/>
        <dbReference type="ChEBI" id="CHEBI:15378"/>
        <dbReference type="ChEBI" id="CHEBI:15379"/>
        <dbReference type="ChEBI" id="CHEBI:57870"/>
        <dbReference type="ChEBI" id="CHEBI:58033"/>
        <dbReference type="ChEBI" id="CHEBI:58272"/>
    </reaction>
</comment>
<comment type="cofactor">
    <cofactor evidence="1">
        <name>Mg(2+)</name>
        <dbReference type="ChEBI" id="CHEBI:18420"/>
    </cofactor>
    <text evidence="1">Binds 1 Mg(2+) ion per subunit.</text>
</comment>
<comment type="subunit">
    <text evidence="1">Heterohexadecamer of 8 large chains and 8 small chains.</text>
</comment>
<comment type="subcellular location">
    <subcellularLocation>
        <location>Plastid</location>
        <location>Chloroplast</location>
    </subcellularLocation>
</comment>
<comment type="miscellaneous">
    <text evidence="1">The basic functional RuBisCO is composed of a large chain homodimer in a 'head-to-tail' conformation. In form I RuBisCO this homodimer is arranged in a barrel-like tetramer with the small subunits forming a tetrameric 'cap' on each end of the 'barrel'.</text>
</comment>
<comment type="similarity">
    <text evidence="1">Belongs to the RuBisCO large chain family. Type I subfamily.</text>
</comment>